<name>HISZ_SYNC1</name>
<gene>
    <name evidence="1" type="primary">hisZ</name>
    <name type="ordered locus">Pcar_0202</name>
</gene>
<evidence type="ECO:0000255" key="1">
    <source>
        <dbReference type="HAMAP-Rule" id="MF_00125"/>
    </source>
</evidence>
<dbReference type="EMBL" id="CP000142">
    <property type="protein sequence ID" value="ABA87463.1"/>
    <property type="molecule type" value="Genomic_DNA"/>
</dbReference>
<dbReference type="RefSeq" id="WP_011339863.1">
    <property type="nucleotide sequence ID" value="NC_007498.2"/>
</dbReference>
<dbReference type="SMR" id="Q3A829"/>
<dbReference type="STRING" id="338963.Pcar_0202"/>
<dbReference type="KEGG" id="pca:Pcar_0202"/>
<dbReference type="eggNOG" id="COG3705">
    <property type="taxonomic scope" value="Bacteria"/>
</dbReference>
<dbReference type="HOGENOM" id="CLU_025113_0_2_7"/>
<dbReference type="OrthoDB" id="9800814at2"/>
<dbReference type="UniPathway" id="UPA00031">
    <property type="reaction ID" value="UER00006"/>
</dbReference>
<dbReference type="Proteomes" id="UP000002534">
    <property type="component" value="Chromosome"/>
</dbReference>
<dbReference type="GO" id="GO:0005737">
    <property type="term" value="C:cytoplasm"/>
    <property type="evidence" value="ECO:0007669"/>
    <property type="project" value="UniProtKB-SubCell"/>
</dbReference>
<dbReference type="GO" id="GO:0004821">
    <property type="term" value="F:histidine-tRNA ligase activity"/>
    <property type="evidence" value="ECO:0007669"/>
    <property type="project" value="TreeGrafter"/>
</dbReference>
<dbReference type="GO" id="GO:0006427">
    <property type="term" value="P:histidyl-tRNA aminoacylation"/>
    <property type="evidence" value="ECO:0007669"/>
    <property type="project" value="TreeGrafter"/>
</dbReference>
<dbReference type="GO" id="GO:0000105">
    <property type="term" value="P:L-histidine biosynthetic process"/>
    <property type="evidence" value="ECO:0007669"/>
    <property type="project" value="UniProtKB-UniRule"/>
</dbReference>
<dbReference type="CDD" id="cd00773">
    <property type="entry name" value="HisRS-like_core"/>
    <property type="match status" value="1"/>
</dbReference>
<dbReference type="Gene3D" id="3.30.930.10">
    <property type="entry name" value="Bira Bifunctional Protein, Domain 2"/>
    <property type="match status" value="1"/>
</dbReference>
<dbReference type="HAMAP" id="MF_00125">
    <property type="entry name" value="HisZ"/>
    <property type="match status" value="1"/>
</dbReference>
<dbReference type="InterPro" id="IPR045864">
    <property type="entry name" value="aa-tRNA-synth_II/BPL/LPL"/>
</dbReference>
<dbReference type="InterPro" id="IPR041715">
    <property type="entry name" value="HisRS-like_core"/>
</dbReference>
<dbReference type="InterPro" id="IPR004516">
    <property type="entry name" value="HisRS/HisZ"/>
</dbReference>
<dbReference type="InterPro" id="IPR004517">
    <property type="entry name" value="HisZ"/>
</dbReference>
<dbReference type="NCBIfam" id="TIGR00443">
    <property type="entry name" value="hisZ_biosyn_reg"/>
    <property type="match status" value="1"/>
</dbReference>
<dbReference type="NCBIfam" id="NF008942">
    <property type="entry name" value="PRK12292.2-5"/>
    <property type="match status" value="1"/>
</dbReference>
<dbReference type="PANTHER" id="PTHR43707:SF1">
    <property type="entry name" value="HISTIDINE--TRNA LIGASE, MITOCHONDRIAL-RELATED"/>
    <property type="match status" value="1"/>
</dbReference>
<dbReference type="PANTHER" id="PTHR43707">
    <property type="entry name" value="HISTIDYL-TRNA SYNTHETASE"/>
    <property type="match status" value="1"/>
</dbReference>
<dbReference type="Pfam" id="PF13393">
    <property type="entry name" value="tRNA-synt_His"/>
    <property type="match status" value="1"/>
</dbReference>
<dbReference type="PIRSF" id="PIRSF001549">
    <property type="entry name" value="His-tRNA_synth"/>
    <property type="match status" value="1"/>
</dbReference>
<dbReference type="SUPFAM" id="SSF52954">
    <property type="entry name" value="Class II aaRS ABD-related"/>
    <property type="match status" value="1"/>
</dbReference>
<dbReference type="SUPFAM" id="SSF55681">
    <property type="entry name" value="Class II aaRS and biotin synthetases"/>
    <property type="match status" value="1"/>
</dbReference>
<comment type="function">
    <text evidence="1">Required for the first step of histidine biosynthesis. May allow the feedback regulation of ATP phosphoribosyltransferase activity by histidine.</text>
</comment>
<comment type="pathway">
    <text evidence="1">Amino-acid biosynthesis; L-histidine biosynthesis; L-histidine from 5-phospho-alpha-D-ribose 1-diphosphate: step 1/9.</text>
</comment>
<comment type="subunit">
    <text evidence="1">Heteromultimer composed of HisG and HisZ subunits.</text>
</comment>
<comment type="subcellular location">
    <subcellularLocation>
        <location evidence="1">Cytoplasm</location>
    </subcellularLocation>
</comment>
<comment type="miscellaneous">
    <text>This function is generally fulfilled by the C-terminal part of HisG, which is missing in some bacteria such as this one.</text>
</comment>
<comment type="similarity">
    <text evidence="1">Belongs to the class-II aminoacyl-tRNA synthetase family. HisZ subfamily.</text>
</comment>
<protein>
    <recommendedName>
        <fullName evidence="1">ATP phosphoribosyltransferase regulatory subunit</fullName>
    </recommendedName>
</protein>
<keyword id="KW-0028">Amino-acid biosynthesis</keyword>
<keyword id="KW-0963">Cytoplasm</keyword>
<keyword id="KW-0368">Histidine biosynthesis</keyword>
<keyword id="KW-1185">Reference proteome</keyword>
<organism>
    <name type="scientific">Syntrophotalea carbinolica (strain DSM 2380 / NBRC 103641 / GraBd1)</name>
    <name type="common">Pelobacter carbinolicus</name>
    <dbReference type="NCBI Taxonomy" id="338963"/>
    <lineage>
        <taxon>Bacteria</taxon>
        <taxon>Pseudomonadati</taxon>
        <taxon>Thermodesulfobacteriota</taxon>
        <taxon>Desulfuromonadia</taxon>
        <taxon>Desulfuromonadales</taxon>
        <taxon>Syntrophotaleaceae</taxon>
        <taxon>Syntrophotalea</taxon>
    </lineage>
</organism>
<accession>Q3A829</accession>
<feature type="chain" id="PRO_0000242845" description="ATP phosphoribosyltransferase regulatory subunit">
    <location>
        <begin position="1"/>
        <end position="428"/>
    </location>
</feature>
<sequence length="428" mass="47264">MNRKITVPEAMLPRGVKDFLPNKAAKLEYLKQSLKDVFHRWAFRPIMPPTLEYLDVLERGLGAGLRDKTFRFDDRQNGKLVAFCPDITPQVARIVATRMKGAPLPQRLCYNGKVLRHTEQQAGKDREIIQSGVELIGLQGPEADAEMIAMAIECLQSLGATEFTVDIGQVEFFHGVMDGLNLPAPQALAVQQAIARKDASGLSELLSELSLDDRKYAEVMALPRLFGGREVLDRAADIVVNDRSRRALENLRQILAVLEAYGVEEHVTFDLGELRGLGYHTGVTFQGFLSGMGTAVCSGGRYDTLTARYGMDAPATGFAFNLLNLLMALDRTLESAAVQPFDVMILQSGPDKRAAQSLARALRDQGYACARDIIERSLQDSLDYGRKMHFRHVMVVADQAGDVRLIRLADGSEQTISLQAVLAGEFRL</sequence>
<reference key="1">
    <citation type="submission" date="2005-10" db="EMBL/GenBank/DDBJ databases">
        <title>Complete sequence of Pelobacter carbinolicus DSM 2380.</title>
        <authorList>
            <person name="Copeland A."/>
            <person name="Lucas S."/>
            <person name="Lapidus A."/>
            <person name="Barry K."/>
            <person name="Detter J.C."/>
            <person name="Glavina T."/>
            <person name="Hammon N."/>
            <person name="Israni S."/>
            <person name="Pitluck S."/>
            <person name="Chertkov O."/>
            <person name="Schmutz J."/>
            <person name="Larimer F."/>
            <person name="Land M."/>
            <person name="Kyrpides N."/>
            <person name="Ivanova N."/>
            <person name="Richardson P."/>
        </authorList>
    </citation>
    <scope>NUCLEOTIDE SEQUENCE [LARGE SCALE GENOMIC DNA]</scope>
    <source>
        <strain>DSM 2380 / NBRC 103641 / GraBd1</strain>
    </source>
</reference>
<proteinExistence type="inferred from homology"/>